<organism>
    <name type="scientific">Escherichia coli O6:K15:H31 (strain 536 / UPEC)</name>
    <dbReference type="NCBI Taxonomy" id="362663"/>
    <lineage>
        <taxon>Bacteria</taxon>
        <taxon>Pseudomonadati</taxon>
        <taxon>Pseudomonadota</taxon>
        <taxon>Gammaproteobacteria</taxon>
        <taxon>Enterobacterales</taxon>
        <taxon>Enterobacteriaceae</taxon>
        <taxon>Escherichia</taxon>
    </lineage>
</organism>
<feature type="signal peptide" evidence="1">
    <location>
        <begin position="1"/>
        <end position="21"/>
    </location>
</feature>
<feature type="chain" id="PRO_0000302618" description="Multidrug resistance protein MdtA">
    <location>
        <begin position="22"/>
        <end position="415"/>
    </location>
</feature>
<feature type="region of interest" description="Disordered" evidence="2">
    <location>
        <begin position="31"/>
        <end position="56"/>
    </location>
</feature>
<feature type="region of interest" description="Disordered" evidence="2">
    <location>
        <begin position="392"/>
        <end position="415"/>
    </location>
</feature>
<feature type="compositionally biased region" description="Polar residues" evidence="2">
    <location>
        <begin position="31"/>
        <end position="46"/>
    </location>
</feature>
<feature type="compositionally biased region" description="Basic and acidic residues" evidence="2">
    <location>
        <begin position="399"/>
        <end position="415"/>
    </location>
</feature>
<accession>Q0TG16</accession>
<dbReference type="EMBL" id="CP000247">
    <property type="protein sequence ID" value="ABG70113.1"/>
    <property type="molecule type" value="Genomic_DNA"/>
</dbReference>
<dbReference type="RefSeq" id="WP_000678943.1">
    <property type="nucleotide sequence ID" value="NC_008253.1"/>
</dbReference>
<dbReference type="SMR" id="Q0TG16"/>
<dbReference type="KEGG" id="ecp:ECP_2114"/>
<dbReference type="HOGENOM" id="CLU_018816_2_0_6"/>
<dbReference type="Proteomes" id="UP000009182">
    <property type="component" value="Chromosome"/>
</dbReference>
<dbReference type="GO" id="GO:1990281">
    <property type="term" value="C:efflux pump complex"/>
    <property type="evidence" value="ECO:0007669"/>
    <property type="project" value="TreeGrafter"/>
</dbReference>
<dbReference type="GO" id="GO:0005886">
    <property type="term" value="C:plasma membrane"/>
    <property type="evidence" value="ECO:0007669"/>
    <property type="project" value="UniProtKB-SubCell"/>
</dbReference>
<dbReference type="GO" id="GO:0015562">
    <property type="term" value="F:efflux transmembrane transporter activity"/>
    <property type="evidence" value="ECO:0007669"/>
    <property type="project" value="TreeGrafter"/>
</dbReference>
<dbReference type="FunFam" id="2.40.420.20:FF:000001">
    <property type="entry name" value="Efflux RND transporter periplasmic adaptor subunit"/>
    <property type="match status" value="1"/>
</dbReference>
<dbReference type="FunFam" id="1.10.287.470:FF:000005">
    <property type="entry name" value="Multidrug resistance protein MdtA"/>
    <property type="match status" value="1"/>
</dbReference>
<dbReference type="FunFam" id="2.40.30.170:FF:000006">
    <property type="entry name" value="Multidrug resistance protein MdtA"/>
    <property type="match status" value="1"/>
</dbReference>
<dbReference type="Gene3D" id="2.40.30.170">
    <property type="match status" value="1"/>
</dbReference>
<dbReference type="Gene3D" id="2.40.420.20">
    <property type="match status" value="1"/>
</dbReference>
<dbReference type="Gene3D" id="2.40.50.100">
    <property type="match status" value="1"/>
</dbReference>
<dbReference type="Gene3D" id="1.10.287.470">
    <property type="entry name" value="Helix hairpin bin"/>
    <property type="match status" value="1"/>
</dbReference>
<dbReference type="HAMAP" id="MF_01422">
    <property type="entry name" value="MdtA"/>
    <property type="match status" value="1"/>
</dbReference>
<dbReference type="InterPro" id="IPR032317">
    <property type="entry name" value="CusB_D23"/>
</dbReference>
<dbReference type="InterPro" id="IPR022824">
    <property type="entry name" value="Multidrug-R_MdtA"/>
</dbReference>
<dbReference type="InterPro" id="IPR006143">
    <property type="entry name" value="RND_pump_MFP"/>
</dbReference>
<dbReference type="NCBIfam" id="NF008589">
    <property type="entry name" value="PRK11556.1"/>
    <property type="match status" value="1"/>
</dbReference>
<dbReference type="NCBIfam" id="TIGR01730">
    <property type="entry name" value="RND_mfp"/>
    <property type="match status" value="1"/>
</dbReference>
<dbReference type="PANTHER" id="PTHR30469">
    <property type="entry name" value="MULTIDRUG RESISTANCE PROTEIN MDTA"/>
    <property type="match status" value="1"/>
</dbReference>
<dbReference type="PANTHER" id="PTHR30469:SF12">
    <property type="entry name" value="MULTIDRUG RESISTANCE PROTEIN MDTA"/>
    <property type="match status" value="1"/>
</dbReference>
<dbReference type="Pfam" id="PF16576">
    <property type="entry name" value="HlyD_D23"/>
    <property type="match status" value="1"/>
</dbReference>
<dbReference type="SUPFAM" id="SSF111369">
    <property type="entry name" value="HlyD-like secretion proteins"/>
    <property type="match status" value="1"/>
</dbReference>
<protein>
    <recommendedName>
        <fullName evidence="1">Multidrug resistance protein MdtA</fullName>
    </recommendedName>
    <alternativeName>
        <fullName evidence="1">Multidrug transporter MdtA</fullName>
    </alternativeName>
</protein>
<proteinExistence type="inferred from homology"/>
<sequence length="415" mass="44438">MKGSYKSRWVIVIVVVIAAIAAFWFWQGRNDSQSAAPGATKQAQQSPAGGRRGMRAGPLAPVQAATAVEQAVPRYLTGLGTITAANTVTVRSRVDGQLMALHFQEGQQVKAGDLLAEIDPSQFKVALAQAQGQLAKDKATLANARRDLARYQQLAKTNLVSRQELDAQQALVSETEGTIKADEASVASAQLQLDWSRITAPVDGRVGLKQVDVGNQISSGDTTGIVVITQTHPIDLVFTLPESDIATVVQAQKAGKPLVVEAWDRTNSKKLSEGTLLSLDNQIDATTGTIKVKARFNNQDDALFPNQFVNARMLVDTEQNAVVIPTAALQMGNEGHFVWVLNSENKVSKHLVTPGIQDSQKVVIRAGISAGDRVVTDGIDRLTEGAKVEVVEAQSATTPEEKATSREYAKKGARS</sequence>
<name>MDTA_ECOL5</name>
<keyword id="KW-0997">Cell inner membrane</keyword>
<keyword id="KW-1003">Cell membrane</keyword>
<keyword id="KW-0472">Membrane</keyword>
<keyword id="KW-0732">Signal</keyword>
<keyword id="KW-0813">Transport</keyword>
<comment type="function">
    <text evidence="1">The MdtABC tripartite complex confers resistance against novobiocin and deoxycholate.</text>
</comment>
<comment type="subunit">
    <text evidence="1">Part of a tripartite efflux system composed of MdtA, MdtB and MdtC.</text>
</comment>
<comment type="subcellular location">
    <subcellularLocation>
        <location evidence="1">Cell inner membrane</location>
        <topology evidence="1">Peripheral membrane protein</topology>
    </subcellularLocation>
</comment>
<comment type="induction">
    <text evidence="1">The mdtABC operon is transcriptionally activated by BaeR.</text>
</comment>
<comment type="similarity">
    <text evidence="1">Belongs to the membrane fusion protein (MFP) (TC 8.A.1) family.</text>
</comment>
<reference key="1">
    <citation type="journal article" date="2006" name="Mol. Microbiol.">
        <title>Role of pathogenicity island-associated integrases in the genome plasticity of uropathogenic Escherichia coli strain 536.</title>
        <authorList>
            <person name="Hochhut B."/>
            <person name="Wilde C."/>
            <person name="Balling G."/>
            <person name="Middendorf B."/>
            <person name="Dobrindt U."/>
            <person name="Brzuszkiewicz E."/>
            <person name="Gottschalk G."/>
            <person name="Carniel E."/>
            <person name="Hacker J."/>
        </authorList>
    </citation>
    <scope>NUCLEOTIDE SEQUENCE [LARGE SCALE GENOMIC DNA]</scope>
    <source>
        <strain>536 / UPEC</strain>
    </source>
</reference>
<evidence type="ECO:0000255" key="1">
    <source>
        <dbReference type="HAMAP-Rule" id="MF_01422"/>
    </source>
</evidence>
<evidence type="ECO:0000256" key="2">
    <source>
        <dbReference type="SAM" id="MobiDB-lite"/>
    </source>
</evidence>
<gene>
    <name evidence="1" type="primary">mdtA</name>
    <name type="ordered locus">ECP_2114</name>
</gene>